<gene>
    <name type="primary">phoD</name>
    <name type="synonym">ycbS</name>
    <name type="ordered locus">BSU02620</name>
</gene>
<feature type="signal peptide" description="Tat-type signal" evidence="2">
    <location>
        <begin position="1"/>
        <end position="56"/>
    </location>
</feature>
<feature type="chain" id="PRO_0000022088" description="Alkaline phosphatase D">
    <location>
        <begin position="57"/>
        <end position="583"/>
    </location>
</feature>
<feature type="region of interest" description="Disordered" evidence="1">
    <location>
        <begin position="339"/>
        <end position="359"/>
    </location>
</feature>
<feature type="compositionally biased region" description="Basic and acidic residues" evidence="1">
    <location>
        <begin position="350"/>
        <end position="359"/>
    </location>
</feature>
<feature type="sequence variant">
    <original>N</original>
    <variation>K</variation>
    <location>
        <position position="59"/>
    </location>
</feature>
<feature type="strand" evidence="4">
    <location>
        <begin position="69"/>
        <end position="72"/>
    </location>
</feature>
<feature type="strand" evidence="4">
    <location>
        <begin position="79"/>
        <end position="84"/>
    </location>
</feature>
<feature type="helix" evidence="4">
    <location>
        <begin position="89"/>
        <end position="91"/>
    </location>
</feature>
<feature type="strand" evidence="4">
    <location>
        <begin position="100"/>
        <end position="109"/>
    </location>
</feature>
<feature type="strand" evidence="4">
    <location>
        <begin position="112"/>
        <end position="123"/>
    </location>
</feature>
<feature type="helix" evidence="4">
    <location>
        <begin position="125"/>
        <end position="127"/>
    </location>
</feature>
<feature type="strand" evidence="4">
    <location>
        <begin position="130"/>
        <end position="135"/>
    </location>
</feature>
<feature type="strand" evidence="4">
    <location>
        <begin position="143"/>
        <end position="150"/>
    </location>
</feature>
<feature type="strand" evidence="4">
    <location>
        <begin position="158"/>
        <end position="161"/>
    </location>
</feature>
<feature type="strand" evidence="4">
    <location>
        <begin position="173"/>
        <end position="178"/>
    </location>
</feature>
<feature type="helix" evidence="4">
    <location>
        <begin position="183"/>
        <end position="185"/>
    </location>
</feature>
<feature type="helix" evidence="4">
    <location>
        <begin position="189"/>
        <end position="194"/>
    </location>
</feature>
<feature type="strand" evidence="4">
    <location>
        <begin position="200"/>
        <end position="204"/>
    </location>
</feature>
<feature type="strand" evidence="4">
    <location>
        <begin position="228"/>
        <end position="231"/>
    </location>
</feature>
<feature type="helix" evidence="4">
    <location>
        <begin position="235"/>
        <end position="246"/>
    </location>
</feature>
<feature type="helix" evidence="4">
    <location>
        <begin position="249"/>
        <end position="257"/>
    </location>
</feature>
<feature type="strand" evidence="4">
    <location>
        <begin position="258"/>
        <end position="262"/>
    </location>
</feature>
<feature type="turn" evidence="4">
    <location>
        <begin position="267"/>
        <end position="269"/>
    </location>
</feature>
<feature type="helix" evidence="4">
    <location>
        <begin position="284"/>
        <end position="301"/>
    </location>
</feature>
<feature type="helix" evidence="4">
    <location>
        <begin position="306"/>
        <end position="308"/>
    </location>
</feature>
<feature type="strand" evidence="4">
    <location>
        <begin position="319"/>
        <end position="323"/>
    </location>
</feature>
<feature type="turn" evidence="4">
    <location>
        <begin position="324"/>
        <end position="326"/>
    </location>
</feature>
<feature type="strand" evidence="4">
    <location>
        <begin position="327"/>
        <end position="331"/>
    </location>
</feature>
<feature type="strand" evidence="4">
    <location>
        <begin position="334"/>
        <end position="337"/>
    </location>
</feature>
<feature type="helix" evidence="4">
    <location>
        <begin position="342"/>
        <end position="344"/>
    </location>
</feature>
<feature type="strand" evidence="4">
    <location>
        <begin position="345"/>
        <end position="348"/>
    </location>
</feature>
<feature type="helix" evidence="4">
    <location>
        <begin position="352"/>
        <end position="355"/>
    </location>
</feature>
<feature type="helix" evidence="4">
    <location>
        <begin position="364"/>
        <end position="376"/>
    </location>
</feature>
<feature type="strand" evidence="4">
    <location>
        <begin position="379"/>
        <end position="385"/>
    </location>
</feature>
<feature type="strand" evidence="4">
    <location>
        <begin position="398"/>
        <end position="400"/>
    </location>
</feature>
<feature type="helix" evidence="4">
    <location>
        <begin position="408"/>
        <end position="410"/>
    </location>
</feature>
<feature type="helix" evidence="4">
    <location>
        <begin position="412"/>
        <end position="424"/>
    </location>
</feature>
<feature type="strand" evidence="4">
    <location>
        <begin position="430"/>
        <end position="434"/>
    </location>
</feature>
<feature type="strand" evidence="4">
    <location>
        <begin position="436"/>
        <end position="448"/>
    </location>
</feature>
<feature type="strand" evidence="4">
    <location>
        <begin position="456"/>
        <end position="462"/>
    </location>
</feature>
<feature type="strand" evidence="4">
    <location>
        <begin position="473"/>
        <end position="475"/>
    </location>
</feature>
<feature type="helix" evidence="4">
    <location>
        <begin position="479"/>
        <end position="485"/>
    </location>
</feature>
<feature type="strand" evidence="4">
    <location>
        <begin position="489"/>
        <end position="494"/>
    </location>
</feature>
<feature type="strand" evidence="4">
    <location>
        <begin position="496"/>
        <end position="504"/>
    </location>
</feature>
<feature type="strand" evidence="4">
    <location>
        <begin position="507"/>
        <end position="516"/>
    </location>
</feature>
<feature type="strand" evidence="4">
    <location>
        <begin position="518"/>
        <end position="521"/>
    </location>
</feature>
<feature type="strand" evidence="4">
    <location>
        <begin position="526"/>
        <end position="533"/>
    </location>
</feature>
<feature type="strand" evidence="4">
    <location>
        <begin position="540"/>
        <end position="545"/>
    </location>
</feature>
<feature type="helix" evidence="4">
    <location>
        <begin position="560"/>
        <end position="576"/>
    </location>
</feature>
<accession>P42251</accession>
<sequence length="583" mass="65971">MAYDSRFDEWVQKLKEESFQNNTFDRRKFIQGAGKIAGLSLGLTIAQSVGAFEVNAAPNFSSYPFTLGVASGDPLSDSVVLWTRLAPDPLNGGGMPKQAVPVKWEVAKDEHFRKIVRKGTEMAKPSLAHSVHVEADGLEPNKVYYYRFKTGHELSPVGKTKTLPAPGANVPQMTFAFASCQQYEHGYYTAYKHMAKEKLDLVFHLGDYIYEYGPNEYVSKTGNVRTHNSAEIITLQDYRNRHAQYRSDANLKAAHAAFPWVVTWDDHEVENNYANKIPEKGQSVEAFVLRRAAAYQAYYEHMPLRISSLPNGPDMQLYRHFTYGNLASFNVLDTRQYRDDQANNDGNKPPSDESRNPNRTLLGKEQEQWLFNNLGSSTAHWNVLAQQIFFAKWNFGTSASPIYSMDSWDGYPAQRERVINFIKSKNLNNVVVLTGDVHASWASNLHVDFEKTSSKIFGAEFVGTSITSGGNGADKRADTDQILKENPHIQFFNDYRGYVRCTVTPHQWKADYRVMPFVTEPGAAISTRASFVYQKDQTGLRKVSSTTIQGGVKQSDEVEEDRFFSHNKAHEKQMIKKRAKITN</sequence>
<evidence type="ECO:0000256" key="1">
    <source>
        <dbReference type="SAM" id="MobiDB-lite"/>
    </source>
</evidence>
<evidence type="ECO:0000269" key="2">
    <source>
    </source>
</evidence>
<evidence type="ECO:0000305" key="3"/>
<evidence type="ECO:0007829" key="4">
    <source>
        <dbReference type="PDB" id="2YEQ"/>
    </source>
</evidence>
<protein>
    <recommendedName>
        <fullName>Alkaline phosphatase D</fullName>
        <shortName>APaseD</shortName>
        <ecNumber>3.1.3.1</ecNumber>
    </recommendedName>
</protein>
<organism>
    <name type="scientific">Bacillus subtilis (strain 168)</name>
    <dbReference type="NCBI Taxonomy" id="224308"/>
    <lineage>
        <taxon>Bacteria</taxon>
        <taxon>Bacillati</taxon>
        <taxon>Bacillota</taxon>
        <taxon>Bacilli</taxon>
        <taxon>Bacillales</taxon>
        <taxon>Bacillaceae</taxon>
        <taxon>Bacillus</taxon>
    </lineage>
</organism>
<dbReference type="EC" id="3.1.3.1"/>
<dbReference type="EMBL" id="U49060">
    <property type="protein sequence ID" value="AAB47803.1"/>
    <property type="status" value="ALT_FRAME"/>
    <property type="molecule type" value="Genomic_DNA"/>
</dbReference>
<dbReference type="EMBL" id="AL009126">
    <property type="protein sequence ID" value="CAB12056.2"/>
    <property type="molecule type" value="Genomic_DNA"/>
</dbReference>
<dbReference type="EMBL" id="D30808">
    <property type="protein sequence ID" value="BAA06483.1"/>
    <property type="status" value="ALT_FRAME"/>
    <property type="molecule type" value="Genomic_DNA"/>
</dbReference>
<dbReference type="PIR" id="D69676">
    <property type="entry name" value="D69676"/>
</dbReference>
<dbReference type="RefSeq" id="NP_388144.2">
    <property type="nucleotide sequence ID" value="NC_000964.3"/>
</dbReference>
<dbReference type="RefSeq" id="WP_009969242.1">
    <property type="nucleotide sequence ID" value="NZ_OZ025638.1"/>
</dbReference>
<dbReference type="PDB" id="2YEQ">
    <property type="method" value="X-ray"/>
    <property type="resolution" value="1.93 A"/>
    <property type="chains" value="A/B=57-583"/>
</dbReference>
<dbReference type="PDBsum" id="2YEQ"/>
<dbReference type="SMR" id="P42251"/>
<dbReference type="FunCoup" id="P42251">
    <property type="interactions" value="402"/>
</dbReference>
<dbReference type="STRING" id="224308.BSU02620"/>
<dbReference type="PaxDb" id="224308-BSU02620"/>
<dbReference type="EnsemblBacteria" id="CAB12056">
    <property type="protein sequence ID" value="CAB12056"/>
    <property type="gene ID" value="BSU_02620"/>
</dbReference>
<dbReference type="GeneID" id="938391"/>
<dbReference type="KEGG" id="bsu:BSU02620"/>
<dbReference type="PATRIC" id="fig|224308.179.peg.272"/>
<dbReference type="eggNOG" id="COG3540">
    <property type="taxonomic scope" value="Bacteria"/>
</dbReference>
<dbReference type="InParanoid" id="P42251"/>
<dbReference type="OrthoDB" id="9763616at2"/>
<dbReference type="PhylomeDB" id="P42251"/>
<dbReference type="BioCyc" id="BSUB:BSU02620-MONOMER"/>
<dbReference type="EvolutionaryTrace" id="P42251"/>
<dbReference type="Proteomes" id="UP000001570">
    <property type="component" value="Chromosome"/>
</dbReference>
<dbReference type="GO" id="GO:0004035">
    <property type="term" value="F:alkaline phosphatase activity"/>
    <property type="evidence" value="ECO:0007669"/>
    <property type="project" value="UniProtKB-EC"/>
</dbReference>
<dbReference type="CDD" id="cd07389">
    <property type="entry name" value="MPP_PhoD"/>
    <property type="match status" value="1"/>
</dbReference>
<dbReference type="Gene3D" id="3.60.21.70">
    <property type="entry name" value="PhoD-like phosphatase"/>
    <property type="match status" value="1"/>
</dbReference>
<dbReference type="Gene3D" id="2.60.40.380">
    <property type="entry name" value="Purple acid phosphatase-like, N-terminal"/>
    <property type="match status" value="1"/>
</dbReference>
<dbReference type="InterPro" id="IPR029052">
    <property type="entry name" value="Metallo-depent_PP-like"/>
</dbReference>
<dbReference type="InterPro" id="IPR018946">
    <property type="entry name" value="PhoD-like_MPP"/>
</dbReference>
<dbReference type="InterPro" id="IPR038607">
    <property type="entry name" value="PhoD-like_sf"/>
</dbReference>
<dbReference type="InterPro" id="IPR032093">
    <property type="entry name" value="PhoD_N"/>
</dbReference>
<dbReference type="InterPro" id="IPR052900">
    <property type="entry name" value="Phospholipid_Metab_Enz"/>
</dbReference>
<dbReference type="PANTHER" id="PTHR43606:SF2">
    <property type="entry name" value="ALKALINE PHOSPHATASE FAMILY PROTEIN (AFU_ORTHOLOGUE AFUA_5G03860)"/>
    <property type="match status" value="1"/>
</dbReference>
<dbReference type="PANTHER" id="PTHR43606">
    <property type="entry name" value="PHOSPHATASE, PUTATIVE (AFU_ORTHOLOGUE AFUA_6G08710)-RELATED"/>
    <property type="match status" value="1"/>
</dbReference>
<dbReference type="Pfam" id="PF09423">
    <property type="entry name" value="PhoD"/>
    <property type="match status" value="1"/>
</dbReference>
<dbReference type="Pfam" id="PF16655">
    <property type="entry name" value="PhoD_N"/>
    <property type="match status" value="1"/>
</dbReference>
<dbReference type="SUPFAM" id="SSF56300">
    <property type="entry name" value="Metallo-dependent phosphatases"/>
    <property type="match status" value="1"/>
</dbReference>
<keyword id="KW-0002">3D-structure</keyword>
<keyword id="KW-0903">Direct protein sequencing</keyword>
<keyword id="KW-0378">Hydrolase</keyword>
<keyword id="KW-1185">Reference proteome</keyword>
<keyword id="KW-0732">Signal</keyword>
<keyword id="KW-0346">Stress response</keyword>
<comment type="catalytic activity">
    <reaction>
        <text>a phosphate monoester + H2O = an alcohol + phosphate</text>
        <dbReference type="Rhea" id="RHEA:15017"/>
        <dbReference type="ChEBI" id="CHEBI:15377"/>
        <dbReference type="ChEBI" id="CHEBI:30879"/>
        <dbReference type="ChEBI" id="CHEBI:43474"/>
        <dbReference type="ChEBI" id="CHEBI:67140"/>
        <dbReference type="EC" id="3.1.3.1"/>
    </reaction>
</comment>
<comment type="induction">
    <text>By phosphate starvation.</text>
</comment>
<comment type="PTM">
    <text>Predicted to be exported by the Tat system. The position of the signal peptide cleavage has been experimentally proven.</text>
</comment>
<comment type="similarity">
    <text evidence="3">Belongs to the PhoD family.</text>
</comment>
<comment type="sequence caution" evidence="3">
    <conflict type="frameshift">
        <sequence resource="EMBL-CDS" id="AAB47803"/>
    </conflict>
</comment>
<comment type="sequence caution" evidence="3">
    <conflict type="frameshift">
        <sequence resource="EMBL-CDS" id="BAA06483"/>
    </conflict>
</comment>
<name>PPBD_BACSU</name>
<proteinExistence type="evidence at protein level"/>
<reference key="1">
    <citation type="journal article" date="1996" name="Microbiology">
        <title>A Bacillus subtilis secreted phosphodiesterase/alkaline phosphatase is the product of a Pho regulon gene, phoD.</title>
        <authorList>
            <person name="Eder S."/>
            <person name="Shi L."/>
            <person name="Jensen K."/>
            <person name="Yamane K."/>
            <person name="Hulett F.M."/>
        </authorList>
    </citation>
    <scope>NUCLEOTIDE SEQUENCE [GENOMIC DNA]</scope>
    <scope>PROTEIN SEQUENCE OF 57-76</scope>
    <source>
        <strain>168 / JH642</strain>
    </source>
</reference>
<reference key="2">
    <citation type="journal article" date="1997" name="Nature">
        <title>The complete genome sequence of the Gram-positive bacterium Bacillus subtilis.</title>
        <authorList>
            <person name="Kunst F."/>
            <person name="Ogasawara N."/>
            <person name="Moszer I."/>
            <person name="Albertini A.M."/>
            <person name="Alloni G."/>
            <person name="Azevedo V."/>
            <person name="Bertero M.G."/>
            <person name="Bessieres P."/>
            <person name="Bolotin A."/>
            <person name="Borchert S."/>
            <person name="Borriss R."/>
            <person name="Boursier L."/>
            <person name="Brans A."/>
            <person name="Braun M."/>
            <person name="Brignell S.C."/>
            <person name="Bron S."/>
            <person name="Brouillet S."/>
            <person name="Bruschi C.V."/>
            <person name="Caldwell B."/>
            <person name="Capuano V."/>
            <person name="Carter N.M."/>
            <person name="Choi S.-K."/>
            <person name="Codani J.-J."/>
            <person name="Connerton I.F."/>
            <person name="Cummings N.J."/>
            <person name="Daniel R.A."/>
            <person name="Denizot F."/>
            <person name="Devine K.M."/>
            <person name="Duesterhoeft A."/>
            <person name="Ehrlich S.D."/>
            <person name="Emmerson P.T."/>
            <person name="Entian K.-D."/>
            <person name="Errington J."/>
            <person name="Fabret C."/>
            <person name="Ferrari E."/>
            <person name="Foulger D."/>
            <person name="Fritz C."/>
            <person name="Fujita M."/>
            <person name="Fujita Y."/>
            <person name="Fuma S."/>
            <person name="Galizzi A."/>
            <person name="Galleron N."/>
            <person name="Ghim S.-Y."/>
            <person name="Glaser P."/>
            <person name="Goffeau A."/>
            <person name="Golightly E.J."/>
            <person name="Grandi G."/>
            <person name="Guiseppi G."/>
            <person name="Guy B.J."/>
            <person name="Haga K."/>
            <person name="Haiech J."/>
            <person name="Harwood C.R."/>
            <person name="Henaut A."/>
            <person name="Hilbert H."/>
            <person name="Holsappel S."/>
            <person name="Hosono S."/>
            <person name="Hullo M.-F."/>
            <person name="Itaya M."/>
            <person name="Jones L.-M."/>
            <person name="Joris B."/>
            <person name="Karamata D."/>
            <person name="Kasahara Y."/>
            <person name="Klaerr-Blanchard M."/>
            <person name="Klein C."/>
            <person name="Kobayashi Y."/>
            <person name="Koetter P."/>
            <person name="Koningstein G."/>
            <person name="Krogh S."/>
            <person name="Kumano M."/>
            <person name="Kurita K."/>
            <person name="Lapidus A."/>
            <person name="Lardinois S."/>
            <person name="Lauber J."/>
            <person name="Lazarevic V."/>
            <person name="Lee S.-M."/>
            <person name="Levine A."/>
            <person name="Liu H."/>
            <person name="Masuda S."/>
            <person name="Mauel C."/>
            <person name="Medigue C."/>
            <person name="Medina N."/>
            <person name="Mellado R.P."/>
            <person name="Mizuno M."/>
            <person name="Moestl D."/>
            <person name="Nakai S."/>
            <person name="Noback M."/>
            <person name="Noone D."/>
            <person name="O'Reilly M."/>
            <person name="Ogawa K."/>
            <person name="Ogiwara A."/>
            <person name="Oudega B."/>
            <person name="Park S.-H."/>
            <person name="Parro V."/>
            <person name="Pohl T.M."/>
            <person name="Portetelle D."/>
            <person name="Porwollik S."/>
            <person name="Prescott A.M."/>
            <person name="Presecan E."/>
            <person name="Pujic P."/>
            <person name="Purnelle B."/>
            <person name="Rapoport G."/>
            <person name="Rey M."/>
            <person name="Reynolds S."/>
            <person name="Rieger M."/>
            <person name="Rivolta C."/>
            <person name="Rocha E."/>
            <person name="Roche B."/>
            <person name="Rose M."/>
            <person name="Sadaie Y."/>
            <person name="Sato T."/>
            <person name="Scanlan E."/>
            <person name="Schleich S."/>
            <person name="Schroeter R."/>
            <person name="Scoffone F."/>
            <person name="Sekiguchi J."/>
            <person name="Sekowska A."/>
            <person name="Seror S.J."/>
            <person name="Serror P."/>
            <person name="Shin B.-S."/>
            <person name="Soldo B."/>
            <person name="Sorokin A."/>
            <person name="Tacconi E."/>
            <person name="Takagi T."/>
            <person name="Takahashi H."/>
            <person name="Takemaru K."/>
            <person name="Takeuchi M."/>
            <person name="Tamakoshi A."/>
            <person name="Tanaka T."/>
            <person name="Terpstra P."/>
            <person name="Tognoni A."/>
            <person name="Tosato V."/>
            <person name="Uchiyama S."/>
            <person name="Vandenbol M."/>
            <person name="Vannier F."/>
            <person name="Vassarotti A."/>
            <person name="Viari A."/>
            <person name="Wambutt R."/>
            <person name="Wedler E."/>
            <person name="Wedler H."/>
            <person name="Weitzenegger T."/>
            <person name="Winters P."/>
            <person name="Wipat A."/>
            <person name="Yamamoto H."/>
            <person name="Yamane K."/>
            <person name="Yasumoto K."/>
            <person name="Yata K."/>
            <person name="Yoshida K."/>
            <person name="Yoshikawa H.-F."/>
            <person name="Zumstein E."/>
            <person name="Yoshikawa H."/>
            <person name="Danchin A."/>
        </authorList>
    </citation>
    <scope>NUCLEOTIDE SEQUENCE [LARGE SCALE GENOMIC DNA]</scope>
    <source>
        <strain>168</strain>
    </source>
</reference>
<reference key="3">
    <citation type="journal article" date="2009" name="Microbiology">
        <title>From a consortium sequence to a unified sequence: the Bacillus subtilis 168 reference genome a decade later.</title>
        <authorList>
            <person name="Barbe V."/>
            <person name="Cruveiller S."/>
            <person name="Kunst F."/>
            <person name="Lenoble P."/>
            <person name="Meurice G."/>
            <person name="Sekowska A."/>
            <person name="Vallenet D."/>
            <person name="Wang T."/>
            <person name="Moszer I."/>
            <person name="Medigue C."/>
            <person name="Danchin A."/>
        </authorList>
    </citation>
    <scope>SEQUENCE REVISION TO C-TERMINUS</scope>
</reference>
<reference key="4">
    <citation type="journal article" date="1995" name="Microbiology">
        <title>Determination of a 21548 bp nucleotide sequence around the 24 degrees region of the Bacillus subtilis chromosome.</title>
        <authorList>
            <person name="Ogawa K."/>
            <person name="Akagawa E."/>
            <person name="Nakamura K."/>
            <person name="Yamane K."/>
        </authorList>
    </citation>
    <scope>NUCLEOTIDE SEQUENCE [GENOMIC DNA] OF 95-556</scope>
    <source>
        <strain>168</strain>
    </source>
</reference>
<reference key="5">
    <citation type="journal article" date="1978" name="J. Bacteriol.">
        <title>Purification and characterization of extracellular soluble and membrane-bound insoluble alkaline phosphatases possessing phosphodiesterase activities in Bacillus subtilis.</title>
        <authorList>
            <person name="Yamane K."/>
            <person name="Maruo B."/>
        </authorList>
    </citation>
    <scope>CHARACTERIZATION</scope>
    <source>
        <strain>6060-BC6</strain>
    </source>
</reference>